<evidence type="ECO:0000305" key="1"/>
<proteinExistence type="inferred from homology"/>
<keyword id="KW-0496">Mitochondrion</keyword>
<keyword id="KW-0687">Ribonucleoprotein</keyword>
<keyword id="KW-0689">Ribosomal protein</keyword>
<organism>
    <name type="scientific">Reclinomonas americana</name>
    <dbReference type="NCBI Taxonomy" id="48483"/>
    <lineage>
        <taxon>Eukaryota</taxon>
        <taxon>Discoba</taxon>
        <taxon>Jakobida</taxon>
        <taxon>Histionina</taxon>
        <taxon>Histionidae</taxon>
        <taxon>Reclinomonas</taxon>
    </lineage>
</organism>
<name>RM05_RECAM</name>
<feature type="chain" id="PRO_0000125080" description="Large ribosomal subunit protein uL5m">
    <location>
        <begin position="1"/>
        <end position="182"/>
    </location>
</feature>
<accession>O21252</accession>
<reference key="1">
    <citation type="journal article" date="1997" name="Nature">
        <title>An ancestral mitochondrial DNA resembling a eubacterial genome in miniature.</title>
        <authorList>
            <person name="Lang B.F."/>
            <person name="Burger G."/>
            <person name="O'Kelly C.J."/>
            <person name="Cedergren R."/>
            <person name="Golding G.B."/>
            <person name="Lemieux C."/>
            <person name="Sankoff D."/>
            <person name="Turmel M."/>
            <person name="Gray M.W."/>
        </authorList>
    </citation>
    <scope>NUCLEOTIDE SEQUENCE [GENOMIC DNA]</scope>
    <source>
        <strain>ATCC 50394</strain>
    </source>
</reference>
<geneLocation type="mitochondrion"/>
<comment type="subcellular location">
    <subcellularLocation>
        <location>Mitochondrion</location>
    </subcellularLocation>
</comment>
<comment type="similarity">
    <text evidence="1">Belongs to the universal ribosomal protein uL5 family.</text>
</comment>
<sequence length="182" mass="20671">MNRLKKHYEEIIRLDMIRKFNYVNPHMVPKIDKIIVNMGVKEAASDKKQILAPLLILELITGQKAIVTKAKKSISNFKIRKGFPIGVSVTLRGNNMYEFLSKLITLVLPKIRDFKGVPFTSINKYGHLAIGIKDLLVFPEIESEYDKFNRVYGANIVIVTTAKTKKEAGVLLSGFQIPLNKR</sequence>
<gene>
    <name type="primary">RPL5</name>
</gene>
<protein>
    <recommendedName>
        <fullName evidence="1">Large ribosomal subunit protein uL5m</fullName>
    </recommendedName>
    <alternativeName>
        <fullName>60S ribosomal protein L5, mitochondrial</fullName>
    </alternativeName>
</protein>
<dbReference type="EMBL" id="AF007261">
    <property type="protein sequence ID" value="AAD11879.1"/>
    <property type="molecule type" value="Genomic_DNA"/>
</dbReference>
<dbReference type="PIR" id="S78146">
    <property type="entry name" value="S78146"/>
</dbReference>
<dbReference type="RefSeq" id="NP_044764.1">
    <property type="nucleotide sequence ID" value="NC_001823.1"/>
</dbReference>
<dbReference type="SMR" id="O21252"/>
<dbReference type="GeneID" id="801146"/>
<dbReference type="GO" id="GO:0005739">
    <property type="term" value="C:mitochondrion"/>
    <property type="evidence" value="ECO:0007669"/>
    <property type="project" value="UniProtKB-SubCell"/>
</dbReference>
<dbReference type="GO" id="GO:1990904">
    <property type="term" value="C:ribonucleoprotein complex"/>
    <property type="evidence" value="ECO:0007669"/>
    <property type="project" value="UniProtKB-KW"/>
</dbReference>
<dbReference type="GO" id="GO:0005840">
    <property type="term" value="C:ribosome"/>
    <property type="evidence" value="ECO:0007669"/>
    <property type="project" value="UniProtKB-KW"/>
</dbReference>
<dbReference type="GO" id="GO:0003735">
    <property type="term" value="F:structural constituent of ribosome"/>
    <property type="evidence" value="ECO:0007669"/>
    <property type="project" value="InterPro"/>
</dbReference>
<dbReference type="GO" id="GO:0006412">
    <property type="term" value="P:translation"/>
    <property type="evidence" value="ECO:0007669"/>
    <property type="project" value="InterPro"/>
</dbReference>
<dbReference type="FunFam" id="3.30.1440.10:FF:000001">
    <property type="entry name" value="50S ribosomal protein L5"/>
    <property type="match status" value="1"/>
</dbReference>
<dbReference type="Gene3D" id="3.30.1440.10">
    <property type="match status" value="1"/>
</dbReference>
<dbReference type="HAMAP" id="MF_01333_B">
    <property type="entry name" value="Ribosomal_uL5_B"/>
    <property type="match status" value="1"/>
</dbReference>
<dbReference type="InterPro" id="IPR002132">
    <property type="entry name" value="Ribosomal_uL5"/>
</dbReference>
<dbReference type="InterPro" id="IPR020930">
    <property type="entry name" value="Ribosomal_uL5_bac-type"/>
</dbReference>
<dbReference type="InterPro" id="IPR031309">
    <property type="entry name" value="Ribosomal_uL5_C"/>
</dbReference>
<dbReference type="InterPro" id="IPR020929">
    <property type="entry name" value="Ribosomal_uL5_CS"/>
</dbReference>
<dbReference type="InterPro" id="IPR022803">
    <property type="entry name" value="Ribosomal_uL5_dom_sf"/>
</dbReference>
<dbReference type="InterPro" id="IPR031310">
    <property type="entry name" value="Ribosomal_uL5_N"/>
</dbReference>
<dbReference type="NCBIfam" id="NF000585">
    <property type="entry name" value="PRK00010.1"/>
    <property type="match status" value="1"/>
</dbReference>
<dbReference type="PANTHER" id="PTHR11994">
    <property type="entry name" value="60S RIBOSOMAL PROTEIN L11-RELATED"/>
    <property type="match status" value="1"/>
</dbReference>
<dbReference type="Pfam" id="PF00281">
    <property type="entry name" value="Ribosomal_L5"/>
    <property type="match status" value="1"/>
</dbReference>
<dbReference type="Pfam" id="PF00673">
    <property type="entry name" value="Ribosomal_L5_C"/>
    <property type="match status" value="1"/>
</dbReference>
<dbReference type="PIRSF" id="PIRSF002161">
    <property type="entry name" value="Ribosomal_L5"/>
    <property type="match status" value="1"/>
</dbReference>
<dbReference type="SUPFAM" id="SSF55282">
    <property type="entry name" value="RL5-like"/>
    <property type="match status" value="1"/>
</dbReference>
<dbReference type="PROSITE" id="PS00358">
    <property type="entry name" value="RIBOSOMAL_L5"/>
    <property type="match status" value="1"/>
</dbReference>